<comment type="alternative products">
    <event type="alternative splicing"/>
    <isoform>
        <id>Q86TI4-3</id>
        <name>3</name>
        <sequence type="displayed"/>
    </isoform>
    <isoform>
        <id>Q86TI4-1</id>
        <name>1</name>
        <sequence type="described" ref="VSP_039818"/>
    </isoform>
    <isoform>
        <id>Q86TI4-2</id>
        <name>2</name>
        <sequence type="described" ref="VSP_031725 VSP_031726"/>
    </isoform>
    <isoform>
        <id>Q86TI4-4</id>
        <name>4</name>
        <sequence type="described" ref="VSP_054908"/>
    </isoform>
</comment>
<comment type="miscellaneous">
    <molecule>Isoform 1</molecule>
    <text evidence="4">May be produced at very low levels due to a premature stop codon in the mRNA, leading to nonsense-mediated mRNA decay.</text>
</comment>
<comment type="sequence caution" evidence="4">
    <conflict type="erroneous initiation">
        <sequence resource="EMBL-CDS" id="AAI07126"/>
    </conflict>
    <text>Truncated N-terminus.</text>
</comment>
<proteinExistence type="evidence at transcript level"/>
<sequence>MGGGGSALRVCADHRGGINWLSLSPDGQRLLTGSEDGTARLWSTADGQCCALLQGHESYVTFCQLEDEAAFTCSADCTIRRWDVLTGQCLQVYRGHTSIVNRILVANNQLFSSSYDRTARVWSVDKGQMSREFRGHRNCVLTLAYSAPWDLPSTPCAEEAAAGGLLVTGSTDGTAKVWQVASGCCHQTLRGHTGAVLCLVLDTPGHTAFTGSTDATIRAWDILSGEQLRVFREHRGSVICLELVNRLVYSGSADRTVKCWLADTGECVRTFTAHRRNVSALKYHAGTLFTGSGDACARAFDAQSGELRRVFRGHTFIINCIQVHGQVLYTASHDGALRLWDVRGLRGAPRPPPPMRSLSRLFSNKVGCAAAPLQPA</sequence>
<evidence type="ECO:0000269" key="1">
    <source>
    </source>
</evidence>
<evidence type="ECO:0000303" key="2">
    <source>
    </source>
</evidence>
<evidence type="ECO:0000303" key="3">
    <source>
    </source>
</evidence>
<evidence type="ECO:0000305" key="4"/>
<reference key="1">
    <citation type="journal article" date="2004" name="Nat. Genet.">
        <title>Complete sequencing and characterization of 21,243 full-length human cDNAs.</title>
        <authorList>
            <person name="Ota T."/>
            <person name="Suzuki Y."/>
            <person name="Nishikawa T."/>
            <person name="Otsuki T."/>
            <person name="Sugiyama T."/>
            <person name="Irie R."/>
            <person name="Wakamatsu A."/>
            <person name="Hayashi K."/>
            <person name="Sato H."/>
            <person name="Nagai K."/>
            <person name="Kimura K."/>
            <person name="Makita H."/>
            <person name="Sekine M."/>
            <person name="Obayashi M."/>
            <person name="Nishi T."/>
            <person name="Shibahara T."/>
            <person name="Tanaka T."/>
            <person name="Ishii S."/>
            <person name="Yamamoto J."/>
            <person name="Saito K."/>
            <person name="Kawai Y."/>
            <person name="Isono Y."/>
            <person name="Nakamura Y."/>
            <person name="Nagahari K."/>
            <person name="Murakami K."/>
            <person name="Yasuda T."/>
            <person name="Iwayanagi T."/>
            <person name="Wagatsuma M."/>
            <person name="Shiratori A."/>
            <person name="Sudo H."/>
            <person name="Hosoiri T."/>
            <person name="Kaku Y."/>
            <person name="Kodaira H."/>
            <person name="Kondo H."/>
            <person name="Sugawara M."/>
            <person name="Takahashi M."/>
            <person name="Kanda K."/>
            <person name="Yokoi T."/>
            <person name="Furuya T."/>
            <person name="Kikkawa E."/>
            <person name="Omura Y."/>
            <person name="Abe K."/>
            <person name="Kamihara K."/>
            <person name="Katsuta N."/>
            <person name="Sato K."/>
            <person name="Tanikawa M."/>
            <person name="Yamazaki M."/>
            <person name="Ninomiya K."/>
            <person name="Ishibashi T."/>
            <person name="Yamashita H."/>
            <person name="Murakawa K."/>
            <person name="Fujimori K."/>
            <person name="Tanai H."/>
            <person name="Kimata M."/>
            <person name="Watanabe M."/>
            <person name="Hiraoka S."/>
            <person name="Chiba Y."/>
            <person name="Ishida S."/>
            <person name="Ono Y."/>
            <person name="Takiguchi S."/>
            <person name="Watanabe S."/>
            <person name="Yosida M."/>
            <person name="Hotuta T."/>
            <person name="Kusano J."/>
            <person name="Kanehori K."/>
            <person name="Takahashi-Fujii A."/>
            <person name="Hara H."/>
            <person name="Tanase T.-O."/>
            <person name="Nomura Y."/>
            <person name="Togiya S."/>
            <person name="Komai F."/>
            <person name="Hara R."/>
            <person name="Takeuchi K."/>
            <person name="Arita M."/>
            <person name="Imose N."/>
            <person name="Musashino K."/>
            <person name="Yuuki H."/>
            <person name="Oshima A."/>
            <person name="Sasaki N."/>
            <person name="Aotsuka S."/>
            <person name="Yoshikawa Y."/>
            <person name="Matsunawa H."/>
            <person name="Ichihara T."/>
            <person name="Shiohata N."/>
            <person name="Sano S."/>
            <person name="Moriya S."/>
            <person name="Momiyama H."/>
            <person name="Satoh N."/>
            <person name="Takami S."/>
            <person name="Terashima Y."/>
            <person name="Suzuki O."/>
            <person name="Nakagawa S."/>
            <person name="Senoh A."/>
            <person name="Mizoguchi H."/>
            <person name="Goto Y."/>
            <person name="Shimizu F."/>
            <person name="Wakebe H."/>
            <person name="Hishigaki H."/>
            <person name="Watanabe T."/>
            <person name="Sugiyama A."/>
            <person name="Takemoto M."/>
            <person name="Kawakami B."/>
            <person name="Yamazaki M."/>
            <person name="Watanabe K."/>
            <person name="Kumagai A."/>
            <person name="Itakura S."/>
            <person name="Fukuzumi Y."/>
            <person name="Fujimori Y."/>
            <person name="Komiyama M."/>
            <person name="Tashiro H."/>
            <person name="Tanigami A."/>
            <person name="Fujiwara T."/>
            <person name="Ono T."/>
            <person name="Yamada K."/>
            <person name="Fujii Y."/>
            <person name="Ozaki K."/>
            <person name="Hirao M."/>
            <person name="Ohmori Y."/>
            <person name="Kawabata A."/>
            <person name="Hikiji T."/>
            <person name="Kobatake N."/>
            <person name="Inagaki H."/>
            <person name="Ikema Y."/>
            <person name="Okamoto S."/>
            <person name="Okitani R."/>
            <person name="Kawakami T."/>
            <person name="Noguchi S."/>
            <person name="Itoh T."/>
            <person name="Shigeta K."/>
            <person name="Senba T."/>
            <person name="Matsumura K."/>
            <person name="Nakajima Y."/>
            <person name="Mizuno T."/>
            <person name="Morinaga M."/>
            <person name="Sasaki M."/>
            <person name="Togashi T."/>
            <person name="Oyama M."/>
            <person name="Hata H."/>
            <person name="Watanabe M."/>
            <person name="Komatsu T."/>
            <person name="Mizushima-Sugano J."/>
            <person name="Satoh T."/>
            <person name="Shirai Y."/>
            <person name="Takahashi Y."/>
            <person name="Nakagawa K."/>
            <person name="Okumura K."/>
            <person name="Nagase T."/>
            <person name="Nomura N."/>
            <person name="Kikuchi H."/>
            <person name="Masuho Y."/>
            <person name="Yamashita R."/>
            <person name="Nakai K."/>
            <person name="Yada T."/>
            <person name="Nakamura Y."/>
            <person name="Ohara O."/>
            <person name="Isogai T."/>
            <person name="Sugano S."/>
        </authorList>
    </citation>
    <scope>NUCLEOTIDE SEQUENCE [LARGE SCALE MRNA] (ISOFORMS 2 AND 4)</scope>
    <source>
        <tissue>Subthalamic nucleus</tissue>
        <tissue>Teratocarcinoma</tissue>
    </source>
</reference>
<reference key="2">
    <citation type="journal article" date="2003" name="Nature">
        <title>The DNA sequence of human chromosome 7.</title>
        <authorList>
            <person name="Hillier L.W."/>
            <person name="Fulton R.S."/>
            <person name="Fulton L.A."/>
            <person name="Graves T.A."/>
            <person name="Pepin K.H."/>
            <person name="Wagner-McPherson C."/>
            <person name="Layman D."/>
            <person name="Maas J."/>
            <person name="Jaeger S."/>
            <person name="Walker R."/>
            <person name="Wylie K."/>
            <person name="Sekhon M."/>
            <person name="Becker M.C."/>
            <person name="O'Laughlin M.D."/>
            <person name="Schaller M.E."/>
            <person name="Fewell G.A."/>
            <person name="Delehaunty K.D."/>
            <person name="Miner T.L."/>
            <person name="Nash W.E."/>
            <person name="Cordes M."/>
            <person name="Du H."/>
            <person name="Sun H."/>
            <person name="Edwards J."/>
            <person name="Bradshaw-Cordum H."/>
            <person name="Ali J."/>
            <person name="Andrews S."/>
            <person name="Isak A."/>
            <person name="Vanbrunt A."/>
            <person name="Nguyen C."/>
            <person name="Du F."/>
            <person name="Lamar B."/>
            <person name="Courtney L."/>
            <person name="Kalicki J."/>
            <person name="Ozersky P."/>
            <person name="Bielicki L."/>
            <person name="Scott K."/>
            <person name="Holmes A."/>
            <person name="Harkins R."/>
            <person name="Harris A."/>
            <person name="Strong C.M."/>
            <person name="Hou S."/>
            <person name="Tomlinson C."/>
            <person name="Dauphin-Kohlberg S."/>
            <person name="Kozlowicz-Reilly A."/>
            <person name="Leonard S."/>
            <person name="Rohlfing T."/>
            <person name="Rock S.M."/>
            <person name="Tin-Wollam A.-M."/>
            <person name="Abbott A."/>
            <person name="Minx P."/>
            <person name="Maupin R."/>
            <person name="Strowmatt C."/>
            <person name="Latreille P."/>
            <person name="Miller N."/>
            <person name="Johnson D."/>
            <person name="Murray J."/>
            <person name="Woessner J.P."/>
            <person name="Wendl M.C."/>
            <person name="Yang S.-P."/>
            <person name="Schultz B.R."/>
            <person name="Wallis J.W."/>
            <person name="Spieth J."/>
            <person name="Bieri T.A."/>
            <person name="Nelson J.O."/>
            <person name="Berkowicz N."/>
            <person name="Wohldmann P.E."/>
            <person name="Cook L.L."/>
            <person name="Hickenbotham M.T."/>
            <person name="Eldred J."/>
            <person name="Williams D."/>
            <person name="Bedell J.A."/>
            <person name="Mardis E.R."/>
            <person name="Clifton S.W."/>
            <person name="Chissoe S.L."/>
            <person name="Marra M.A."/>
            <person name="Raymond C."/>
            <person name="Haugen E."/>
            <person name="Gillett W."/>
            <person name="Zhou Y."/>
            <person name="James R."/>
            <person name="Phelps K."/>
            <person name="Iadanoto S."/>
            <person name="Bubb K."/>
            <person name="Simms E."/>
            <person name="Levy R."/>
            <person name="Clendenning J."/>
            <person name="Kaul R."/>
            <person name="Kent W.J."/>
            <person name="Furey T.S."/>
            <person name="Baertsch R.A."/>
            <person name="Brent M.R."/>
            <person name="Keibler E."/>
            <person name="Flicek P."/>
            <person name="Bork P."/>
            <person name="Suyama M."/>
            <person name="Bailey J.A."/>
            <person name="Portnoy M.E."/>
            <person name="Torrents D."/>
            <person name="Chinwalla A.T."/>
            <person name="Gish W.R."/>
            <person name="Eddy S.R."/>
            <person name="McPherson J.D."/>
            <person name="Olson M.V."/>
            <person name="Eichler E.E."/>
            <person name="Green E.D."/>
            <person name="Waterston R.H."/>
            <person name="Wilson R.K."/>
        </authorList>
    </citation>
    <scope>NUCLEOTIDE SEQUENCE [LARGE SCALE GENOMIC DNA]</scope>
</reference>
<reference key="3">
    <citation type="submission" date="2011-02" db="EMBL/GenBank/DDBJ databases">
        <authorList>
            <person name="Mural R.J."/>
            <person name="Istrail S."/>
            <person name="Sutton G.G."/>
            <person name="Florea L."/>
            <person name="Halpern A.L."/>
            <person name="Mobarry C.M."/>
            <person name="Lippert R."/>
            <person name="Walenz B."/>
            <person name="Shatkay H."/>
            <person name="Dew I."/>
            <person name="Miller J.R."/>
            <person name="Flanigan M.J."/>
            <person name="Edwards N.J."/>
            <person name="Bolanos R."/>
            <person name="Fasulo D."/>
            <person name="Halldorsson B.V."/>
            <person name="Hannenhalli S."/>
            <person name="Turner R."/>
            <person name="Yooseph S."/>
            <person name="Lu F."/>
            <person name="Nusskern D.R."/>
            <person name="Shue B.C."/>
            <person name="Zheng X.H."/>
            <person name="Zhong F."/>
            <person name="Delcher A.L."/>
            <person name="Huson D.H."/>
            <person name="Kravitz S.A."/>
            <person name="Mouchard L."/>
            <person name="Reinert K."/>
            <person name="Remington K.A."/>
            <person name="Clark A.G."/>
            <person name="Waterman M.S."/>
            <person name="Eichler E.E."/>
            <person name="Adams M.D."/>
            <person name="Hunkapiller M.W."/>
            <person name="Myers E.W."/>
            <person name="Venter J.C."/>
        </authorList>
    </citation>
    <scope>NUCLEOTIDE SEQUENCE [LARGE SCALE GENOMIC DNA]</scope>
</reference>
<reference key="4">
    <citation type="journal article" date="2004" name="Genome Res.">
        <title>The status, quality, and expansion of the NIH full-length cDNA project: the Mammalian Gene Collection (MGC).</title>
        <authorList>
            <consortium name="The MGC Project Team"/>
        </authorList>
    </citation>
    <scope>NUCLEOTIDE SEQUENCE [LARGE SCALE MRNA] (ISOFORM 1)</scope>
    <scope>NUCLEOTIDE SEQUENCE [LARGE SCALE MRNA] OF 53-376 (ISOFORM 3)</scope>
    <scope>VARIANT THR-355</scope>
    <source>
        <tissue>PNS</tissue>
    </source>
</reference>
<protein>
    <recommendedName>
        <fullName>WD repeat-containing protein 86</fullName>
    </recommendedName>
</protein>
<name>WDR86_HUMAN</name>
<organism>
    <name type="scientific">Homo sapiens</name>
    <name type="common">Human</name>
    <dbReference type="NCBI Taxonomy" id="9606"/>
    <lineage>
        <taxon>Eukaryota</taxon>
        <taxon>Metazoa</taxon>
        <taxon>Chordata</taxon>
        <taxon>Craniata</taxon>
        <taxon>Vertebrata</taxon>
        <taxon>Euteleostomi</taxon>
        <taxon>Mammalia</taxon>
        <taxon>Eutheria</taxon>
        <taxon>Euarchontoglires</taxon>
        <taxon>Primates</taxon>
        <taxon>Haplorrhini</taxon>
        <taxon>Catarrhini</taxon>
        <taxon>Hominidae</taxon>
        <taxon>Homo</taxon>
    </lineage>
</organism>
<accession>Q86TI4</accession>
<accession>B4DJF1</accession>
<accession>C9JAJ5</accession>
<accession>C9JXE3</accession>
<accession>Q3KNT1</accession>
<accession>Q6ZUS8</accession>
<dbReference type="EMBL" id="AK125347">
    <property type="protein sequence ID" value="BAC86140.1"/>
    <property type="molecule type" value="mRNA"/>
</dbReference>
<dbReference type="EMBL" id="AK296049">
    <property type="protein sequence ID" value="BAG58813.1"/>
    <property type="molecule type" value="mRNA"/>
</dbReference>
<dbReference type="EMBL" id="AC005486">
    <property type="status" value="NOT_ANNOTATED_CDS"/>
    <property type="molecule type" value="Genomic_DNA"/>
</dbReference>
<dbReference type="EMBL" id="AC005996">
    <property type="status" value="NOT_ANNOTATED_CDS"/>
    <property type="molecule type" value="Genomic_DNA"/>
</dbReference>
<dbReference type="EMBL" id="CH471173">
    <property type="protein sequence ID" value="EAW53997.1"/>
    <property type="molecule type" value="Genomic_DNA"/>
</dbReference>
<dbReference type="EMBL" id="BC047921">
    <property type="status" value="NOT_ANNOTATED_CDS"/>
    <property type="molecule type" value="mRNA"/>
</dbReference>
<dbReference type="EMBL" id="BC107125">
    <property type="protein sequence ID" value="AAI07126.1"/>
    <property type="status" value="ALT_INIT"/>
    <property type="molecule type" value="mRNA"/>
</dbReference>
<dbReference type="CCDS" id="CCDS5925.2">
    <molecule id="Q86TI4-3"/>
</dbReference>
<dbReference type="CCDS" id="CCDS64805.1">
    <molecule id="Q86TI4-2"/>
</dbReference>
<dbReference type="CCDS" id="CCDS64806.1">
    <molecule id="Q86TI4-4"/>
</dbReference>
<dbReference type="RefSeq" id="NP_001271189.1">
    <molecule id="Q86TI4-4"/>
    <property type="nucleotide sequence ID" value="NM_001284260.2"/>
</dbReference>
<dbReference type="RefSeq" id="NP_001271190.1">
    <molecule id="Q86TI4-2"/>
    <property type="nucleotide sequence ID" value="NM_001284261.2"/>
</dbReference>
<dbReference type="RefSeq" id="NP_001271191.1">
    <property type="nucleotide sequence ID" value="NM_001284262.1"/>
</dbReference>
<dbReference type="RefSeq" id="NP_938026.2">
    <molecule id="Q86TI4-3"/>
    <property type="nucleotide sequence ID" value="NM_198285.3"/>
</dbReference>
<dbReference type="SMR" id="Q86TI4"/>
<dbReference type="BioGRID" id="131548">
    <property type="interactions" value="27"/>
</dbReference>
<dbReference type="FunCoup" id="Q86TI4">
    <property type="interactions" value="14"/>
</dbReference>
<dbReference type="IntAct" id="Q86TI4">
    <property type="interactions" value="25"/>
</dbReference>
<dbReference type="STRING" id="9606.ENSP00000419162"/>
<dbReference type="iPTMnet" id="Q86TI4"/>
<dbReference type="PhosphoSitePlus" id="Q86TI4"/>
<dbReference type="BioMuta" id="WDR86"/>
<dbReference type="DMDM" id="308153536"/>
<dbReference type="MassIVE" id="Q86TI4"/>
<dbReference type="PaxDb" id="9606-ENSP00000419162"/>
<dbReference type="PeptideAtlas" id="Q86TI4"/>
<dbReference type="ProteomicsDB" id="12112"/>
<dbReference type="ProteomicsDB" id="69702">
    <molecule id="Q86TI4-3"/>
</dbReference>
<dbReference type="ProteomicsDB" id="69703">
    <molecule id="Q86TI4-1"/>
</dbReference>
<dbReference type="ProteomicsDB" id="69704">
    <molecule id="Q86TI4-2"/>
</dbReference>
<dbReference type="ProteomicsDB" id="9331"/>
<dbReference type="Antibodypedia" id="18758">
    <property type="antibodies" value="75 antibodies from 15 providers"/>
</dbReference>
<dbReference type="DNASU" id="349136"/>
<dbReference type="Ensembl" id="ENST00000334493.11">
    <molecule id="Q86TI4-3"/>
    <property type="protein sequence ID" value="ENSP00000335522.7"/>
    <property type="gene ID" value="ENSG00000187260.16"/>
</dbReference>
<dbReference type="Ensembl" id="ENST00000469830.2">
    <molecule id="Q86TI4-4"/>
    <property type="protein sequence ID" value="ENSP00000419162.2"/>
    <property type="gene ID" value="ENSG00000187260.16"/>
</dbReference>
<dbReference type="Ensembl" id="ENST00000477459.5">
    <molecule id="Q86TI4-2"/>
    <property type="protein sequence ID" value="ENSP00000417512.1"/>
    <property type="gene ID" value="ENSG00000187260.16"/>
</dbReference>
<dbReference type="Ensembl" id="ENST00000628331.1">
    <molecule id="Q86TI4-2"/>
    <property type="protein sequence ID" value="ENSP00000486705.1"/>
    <property type="gene ID" value="ENSG00000187260.16"/>
</dbReference>
<dbReference type="GeneID" id="349136"/>
<dbReference type="KEGG" id="hsa:349136"/>
<dbReference type="MANE-Select" id="ENST00000334493.11">
    <property type="protein sequence ID" value="ENSP00000335522.7"/>
    <property type="RefSeq nucleotide sequence ID" value="NM_198285.3"/>
    <property type="RefSeq protein sequence ID" value="NP_938026.2"/>
</dbReference>
<dbReference type="UCSC" id="uc003wkb.3">
    <molecule id="Q86TI4-3"/>
    <property type="organism name" value="human"/>
</dbReference>
<dbReference type="AGR" id="HGNC:28020"/>
<dbReference type="CTD" id="349136"/>
<dbReference type="DisGeNET" id="349136"/>
<dbReference type="GeneCards" id="WDR86"/>
<dbReference type="HGNC" id="HGNC:28020">
    <property type="gene designation" value="WDR86"/>
</dbReference>
<dbReference type="HPA" id="ENSG00000187260">
    <property type="expression patterns" value="Tissue enhanced (cervix, thyroid gland)"/>
</dbReference>
<dbReference type="neXtProt" id="NX_Q86TI4"/>
<dbReference type="OpenTargets" id="ENSG00000187260"/>
<dbReference type="PharmGKB" id="PA145147619"/>
<dbReference type="VEuPathDB" id="HostDB:ENSG00000187260"/>
<dbReference type="eggNOG" id="KOG0274">
    <property type="taxonomic scope" value="Eukaryota"/>
</dbReference>
<dbReference type="GeneTree" id="ENSGT00940000161049"/>
<dbReference type="HOGENOM" id="CLU_000288_57_14_1"/>
<dbReference type="InParanoid" id="Q86TI4"/>
<dbReference type="OMA" id="HGGINWL"/>
<dbReference type="OrthoDB" id="674604at2759"/>
<dbReference type="PAN-GO" id="Q86TI4">
    <property type="GO annotations" value="0 GO annotations based on evolutionary models"/>
</dbReference>
<dbReference type="PhylomeDB" id="Q86TI4"/>
<dbReference type="TreeFam" id="TF338411"/>
<dbReference type="PathwayCommons" id="Q86TI4"/>
<dbReference type="SignaLink" id="Q86TI4"/>
<dbReference type="BioGRID-ORCS" id="349136">
    <property type="hits" value="25 hits in 1139 CRISPR screens"/>
</dbReference>
<dbReference type="GenomeRNAi" id="349136"/>
<dbReference type="Pharos" id="Q86TI4">
    <property type="development level" value="Tdark"/>
</dbReference>
<dbReference type="PRO" id="PR:Q86TI4"/>
<dbReference type="Proteomes" id="UP000005640">
    <property type="component" value="Chromosome 7"/>
</dbReference>
<dbReference type="RNAct" id="Q86TI4">
    <property type="molecule type" value="protein"/>
</dbReference>
<dbReference type="Bgee" id="ENSG00000187260">
    <property type="expression patterns" value="Expressed in right uterine tube and 108 other cell types or tissues"/>
</dbReference>
<dbReference type="ExpressionAtlas" id="Q86TI4">
    <property type="expression patterns" value="baseline and differential"/>
</dbReference>
<dbReference type="CDD" id="cd00200">
    <property type="entry name" value="WD40"/>
    <property type="match status" value="1"/>
</dbReference>
<dbReference type="Gene3D" id="2.130.10.10">
    <property type="entry name" value="YVTN repeat-like/Quinoprotein amine dehydrogenase"/>
    <property type="match status" value="3"/>
</dbReference>
<dbReference type="InterPro" id="IPR020472">
    <property type="entry name" value="G-protein_beta_WD-40_rep"/>
</dbReference>
<dbReference type="InterPro" id="IPR011047">
    <property type="entry name" value="Quinoprotein_ADH-like_sf"/>
</dbReference>
<dbReference type="InterPro" id="IPR015943">
    <property type="entry name" value="WD40/YVTN_repeat-like_dom_sf"/>
</dbReference>
<dbReference type="InterPro" id="IPR019775">
    <property type="entry name" value="WD40_repeat_CS"/>
</dbReference>
<dbReference type="InterPro" id="IPR036322">
    <property type="entry name" value="WD40_repeat_dom_sf"/>
</dbReference>
<dbReference type="InterPro" id="IPR001680">
    <property type="entry name" value="WD40_rpt"/>
</dbReference>
<dbReference type="InterPro" id="IPR044715">
    <property type="entry name" value="WDR86-like"/>
</dbReference>
<dbReference type="PANTHER" id="PTHR44489">
    <property type="match status" value="1"/>
</dbReference>
<dbReference type="PANTHER" id="PTHR44489:SF19">
    <property type="entry name" value="WD REPEAT-CONTAINING PROTEIN 86"/>
    <property type="match status" value="1"/>
</dbReference>
<dbReference type="Pfam" id="PF00400">
    <property type="entry name" value="WD40"/>
    <property type="match status" value="8"/>
</dbReference>
<dbReference type="PRINTS" id="PR00320">
    <property type="entry name" value="GPROTEINBRPT"/>
</dbReference>
<dbReference type="SMART" id="SM00320">
    <property type="entry name" value="WD40"/>
    <property type="match status" value="8"/>
</dbReference>
<dbReference type="SUPFAM" id="SSF50998">
    <property type="entry name" value="Quinoprotein alcohol dehydrogenase-like"/>
    <property type="match status" value="1"/>
</dbReference>
<dbReference type="SUPFAM" id="SSF50978">
    <property type="entry name" value="WD40 repeat-like"/>
    <property type="match status" value="1"/>
</dbReference>
<dbReference type="PROSITE" id="PS00678">
    <property type="entry name" value="WD_REPEATS_1"/>
    <property type="match status" value="2"/>
</dbReference>
<dbReference type="PROSITE" id="PS50082">
    <property type="entry name" value="WD_REPEATS_2"/>
    <property type="match status" value="7"/>
</dbReference>
<dbReference type="PROSITE" id="PS50294">
    <property type="entry name" value="WD_REPEATS_REGION"/>
    <property type="match status" value="1"/>
</dbReference>
<gene>
    <name type="primary">WDR86</name>
</gene>
<keyword id="KW-0025">Alternative splicing</keyword>
<keyword id="KW-1185">Reference proteome</keyword>
<keyword id="KW-0677">Repeat</keyword>
<keyword id="KW-0853">WD repeat</keyword>
<feature type="chain" id="PRO_0000320674" description="WD repeat-containing protein 86">
    <location>
        <begin position="1"/>
        <end position="376"/>
    </location>
</feature>
<feature type="repeat" description="WD 1">
    <location>
        <begin position="13"/>
        <end position="52"/>
    </location>
</feature>
<feature type="repeat" description="WD 2">
    <location>
        <begin position="55"/>
        <end position="94"/>
    </location>
</feature>
<feature type="repeat" description="WD 3">
    <location>
        <begin position="95"/>
        <end position="132"/>
    </location>
</feature>
<feature type="repeat" description="WD 4">
    <location>
        <begin position="135"/>
        <end position="188"/>
    </location>
</feature>
<feature type="repeat" description="WD 5">
    <location>
        <begin position="191"/>
        <end position="232"/>
    </location>
</feature>
<feature type="repeat" description="WD 6">
    <location>
        <begin position="234"/>
        <end position="272"/>
    </location>
</feature>
<feature type="repeat" description="WD 7">
    <location>
        <begin position="274"/>
        <end position="310"/>
    </location>
</feature>
<feature type="repeat" description="WD 8">
    <location>
        <begin position="313"/>
        <end position="350"/>
    </location>
</feature>
<feature type="splice variant" id="VSP_031725" description="In isoform 2." evidence="2">
    <location>
        <begin position="1"/>
        <end position="128"/>
    </location>
</feature>
<feature type="splice variant" id="VSP_039818" description="In isoform 1." evidence="3">
    <original>Q</original>
    <variation>QGRPSHSLPDLFAAAHRPQTADPSSCARRPLSRSPAPAHPGTLAEERLSGPSIWLLSARQGRVPCGLFVANCALLLAFPVDDSHSNNRRLLRASGAEKCAVVTLCYPTYRRGNRLG</variation>
    <location>
        <position position="54"/>
    </location>
</feature>
<feature type="splice variant" id="VSP_031726" description="In isoform 2." evidence="2">
    <original>LVNRLVYSGSADRTVKCWLADTGECVRTFTAHRRNVSALKYHAGTLFTGSGDACARAFDAQSGELRRVFRGHTFIINCIQVHGQVLYTASHDGALRLWDVRGLRGAPRPPPPMRSLSRLFSNKVGCAAAPLQPA</original>
    <variation>CSRAAGTLAPGPSTRSLESCGGCSGATHSSSTASRCTARCSTPPRTTAPCASGTCAGSEVPRGPLRPCAASRGSSATRWAAPPRPCSRPDPAGPLQTPAQTPSGSQSAPPCYPRWWRPMAGEGRGARKPGREESPSQASGFSLVARRRWERECSPWGPPPFPF</variation>
    <location>
        <begin position="243"/>
        <end position="376"/>
    </location>
</feature>
<feature type="splice variant" id="VSP_054908" description="In isoform 4." evidence="2">
    <original>LVNRLVYSGSADRTVKCWLADTGECVRTFTAHRRNVSALKYHAGTLFTGSGDACARAFDAQSGELRRVFRGHTFIINCIQVHGQVLYTASHDGALRLWDVRGLRGAPRPPPPMRSLSRLFSNKVGCAAAPLQPA</original>
    <variation>RERSGGLQSCPSCRPSLLLLAAGEPTRVLWQRGQDRQVLAGRHRGVCAHVHGPQTQRERPQVPRGHLVHGQRGRLRPGLRRAVWRAAEGVPGPHIHHQLHPGARPGALHRLARRRPAPLGRARAPRCPAAPSAHAQPLAALQQQGGLRRRAPAAGLIPRGPCRRQPRHPAAPRAPRPATRGGGARWPARGEERGSPGGRRARRRRLVFLWWPGGAGSGSARPGDRPLFPFRVAPVLPPHP</variation>
    <location>
        <begin position="243"/>
        <end position="376"/>
    </location>
</feature>
<feature type="sequence variant" id="VAR_063633" description="In dbSNP:rs4141455." evidence="1">
    <original>M</original>
    <variation>T</variation>
    <location>
        <position position="355"/>
    </location>
</feature>
<feature type="sequence conflict" description="In Ref. 4; AAI07126." evidence="4" ref="4">
    <original>Q</original>
    <variation>E</variation>
    <location>
        <position position="54"/>
    </location>
</feature>
<feature type="sequence conflict" description="In Ref. 1; BAC86140." evidence="4" ref="1">
    <original>S</original>
    <variation>R</variation>
    <location sequence="Q86TI4-4">
        <position position="182"/>
    </location>
</feature>